<evidence type="ECO:0000255" key="1"/>
<evidence type="ECO:0000305" key="2"/>
<name>CED11_CAEEL</name>
<accession>P34641</accession>
<comment type="function">
    <text>Plays a major role in programmed cell death.</text>
</comment>
<comment type="subcellular location">
    <subcellularLocation>
        <location evidence="2">Membrane</location>
        <topology evidence="2">Multi-pass membrane protein</topology>
    </subcellularLocation>
</comment>
<reference key="1">
    <citation type="journal article" date="1994" name="Nature">
        <title>2.2 Mb of contiguous nucleotide sequence from chromosome III of C. elegans.</title>
        <authorList>
            <person name="Wilson R."/>
            <person name="Ainscough R."/>
            <person name="Anderson K."/>
            <person name="Baynes C."/>
            <person name="Berks M."/>
            <person name="Bonfield J."/>
            <person name="Burton J."/>
            <person name="Connell M."/>
            <person name="Copsey T."/>
            <person name="Cooper J."/>
            <person name="Coulson A."/>
            <person name="Craxton M."/>
            <person name="Dear S."/>
            <person name="Du Z."/>
            <person name="Durbin R."/>
            <person name="Favello A."/>
            <person name="Fraser A."/>
            <person name="Fulton L."/>
            <person name="Gardner A."/>
            <person name="Green P."/>
            <person name="Hawkins T."/>
            <person name="Hillier L."/>
            <person name="Jier M."/>
            <person name="Johnston L."/>
            <person name="Jones M."/>
            <person name="Kershaw J."/>
            <person name="Kirsten J."/>
            <person name="Laisster N."/>
            <person name="Latreille P."/>
            <person name="Lightning J."/>
            <person name="Lloyd C."/>
            <person name="Mortimore B."/>
            <person name="O'Callaghan M."/>
            <person name="Parsons J."/>
            <person name="Percy C."/>
            <person name="Rifken L."/>
            <person name="Roopra A."/>
            <person name="Saunders D."/>
            <person name="Shownkeen R."/>
            <person name="Sims M."/>
            <person name="Smaldon N."/>
            <person name="Smith A."/>
            <person name="Smith M."/>
            <person name="Sonnhammer E."/>
            <person name="Staden R."/>
            <person name="Sulston J."/>
            <person name="Thierry-Mieg J."/>
            <person name="Thomas K."/>
            <person name="Vaudin M."/>
            <person name="Vaughan K."/>
            <person name="Waterston R."/>
            <person name="Watson A."/>
            <person name="Weinstock L."/>
            <person name="Wilkinson-Sproat J."/>
            <person name="Wohldman P."/>
        </authorList>
    </citation>
    <scope>NUCLEOTIDE SEQUENCE [LARGE SCALE GENOMIC DNA]</scope>
    <source>
        <strain>Bristol N2</strain>
    </source>
</reference>
<reference key="2">
    <citation type="journal article" date="1998" name="Science">
        <title>Genome sequence of the nematode C. elegans: a platform for investigating biology.</title>
        <authorList>
            <consortium name="The C. elegans sequencing consortium"/>
        </authorList>
    </citation>
    <scope>NUCLEOTIDE SEQUENCE [LARGE SCALE GENOMIC DNA]</scope>
    <source>
        <strain>Bristol N2</strain>
    </source>
</reference>
<dbReference type="EMBL" id="Z22177">
    <property type="protein sequence ID" value="CAA80145.1"/>
    <property type="molecule type" value="Genomic_DNA"/>
</dbReference>
<dbReference type="PIR" id="S40764">
    <property type="entry name" value="S40764"/>
</dbReference>
<dbReference type="RefSeq" id="NP_499021.1">
    <property type="nucleotide sequence ID" value="NM_066620.6"/>
</dbReference>
<dbReference type="SMR" id="P34641"/>
<dbReference type="FunCoup" id="P34641">
    <property type="interactions" value="1"/>
</dbReference>
<dbReference type="STRING" id="6239.ZK512.3.1"/>
<dbReference type="iPTMnet" id="P34641"/>
<dbReference type="PaxDb" id="6239-ZK512.3"/>
<dbReference type="PeptideAtlas" id="P34641"/>
<dbReference type="EnsemblMetazoa" id="ZK512.3.1">
    <property type="protein sequence ID" value="ZK512.3.1"/>
    <property type="gene ID" value="WBGene00000425"/>
</dbReference>
<dbReference type="GeneID" id="176288"/>
<dbReference type="KEGG" id="cel:CELE_ZK512.3"/>
<dbReference type="UCSC" id="ZK512.3">
    <property type="organism name" value="c. elegans"/>
</dbReference>
<dbReference type="AGR" id="WB:WBGene00000425"/>
<dbReference type="CTD" id="176288"/>
<dbReference type="WormBase" id="ZK512.3">
    <property type="protein sequence ID" value="CE00409"/>
    <property type="gene ID" value="WBGene00000425"/>
    <property type="gene designation" value="ced-11"/>
</dbReference>
<dbReference type="eggNOG" id="KOG3614">
    <property type="taxonomic scope" value="Eukaryota"/>
</dbReference>
<dbReference type="GeneTree" id="ENSGT00940000168216"/>
<dbReference type="HOGENOM" id="CLU_251638_0_0_1"/>
<dbReference type="InParanoid" id="P34641"/>
<dbReference type="OMA" id="SLMPWRV"/>
<dbReference type="OrthoDB" id="10056930at2759"/>
<dbReference type="PhylomeDB" id="P34641"/>
<dbReference type="Reactome" id="R-CEL-3295583">
    <property type="pathway name" value="TRP channels"/>
</dbReference>
<dbReference type="PRO" id="PR:P34641"/>
<dbReference type="Proteomes" id="UP000001940">
    <property type="component" value="Chromosome III"/>
</dbReference>
<dbReference type="Bgee" id="WBGene00000425">
    <property type="expression patterns" value="Expressed in embryo and 3 other cell types or tissues"/>
</dbReference>
<dbReference type="GO" id="GO:0005886">
    <property type="term" value="C:plasma membrane"/>
    <property type="evidence" value="ECO:0000318"/>
    <property type="project" value="GO_Central"/>
</dbReference>
<dbReference type="GO" id="GO:0005261">
    <property type="term" value="F:monoatomic cation channel activity"/>
    <property type="evidence" value="ECO:0000318"/>
    <property type="project" value="GO_Central"/>
</dbReference>
<dbReference type="GO" id="GO:0006915">
    <property type="term" value="P:apoptotic process"/>
    <property type="evidence" value="ECO:0000316"/>
    <property type="project" value="WormBase"/>
</dbReference>
<dbReference type="GO" id="GO:0030001">
    <property type="term" value="P:metal ion transport"/>
    <property type="evidence" value="ECO:0000318"/>
    <property type="project" value="GO_Central"/>
</dbReference>
<dbReference type="GO" id="GO:0098655">
    <property type="term" value="P:monoatomic cation transmembrane transport"/>
    <property type="evidence" value="ECO:0000318"/>
    <property type="project" value="GO_Central"/>
</dbReference>
<dbReference type="InterPro" id="IPR050927">
    <property type="entry name" value="TRPM"/>
</dbReference>
<dbReference type="PANTHER" id="PTHR13800:SF41">
    <property type="entry name" value="PROTEIN CED-11"/>
    <property type="match status" value="1"/>
</dbReference>
<dbReference type="PANTHER" id="PTHR13800">
    <property type="entry name" value="TRANSIENT RECEPTOR POTENTIAL CATION CHANNEL, SUBFAMILY M, MEMBER 6"/>
    <property type="match status" value="1"/>
</dbReference>
<dbReference type="Pfam" id="PF25508">
    <property type="entry name" value="TRPM2"/>
    <property type="match status" value="1"/>
</dbReference>
<feature type="chain" id="PRO_0000089468" description="Protein ced-11">
    <location>
        <begin position="1"/>
        <end position="1418"/>
    </location>
</feature>
<feature type="transmembrane region" description="Helical" evidence="1">
    <location>
        <begin position="617"/>
        <end position="637"/>
    </location>
</feature>
<feature type="transmembrane region" description="Helical" evidence="1">
    <location>
        <begin position="755"/>
        <end position="775"/>
    </location>
</feature>
<feature type="transmembrane region" description="Helical" evidence="1">
    <location>
        <begin position="782"/>
        <end position="802"/>
    </location>
</feature>
<feature type="transmembrane region" description="Helical" evidence="1">
    <location>
        <begin position="818"/>
        <end position="838"/>
    </location>
</feature>
<feature type="transmembrane region" description="Helical" evidence="1">
    <location>
        <begin position="856"/>
        <end position="876"/>
    </location>
</feature>
<feature type="transmembrane region" description="Helical" evidence="1">
    <location>
        <begin position="898"/>
        <end position="918"/>
    </location>
</feature>
<feature type="transmembrane region" description="Helical" evidence="1">
    <location>
        <begin position="986"/>
        <end position="1006"/>
    </location>
</feature>
<keyword id="KW-0053">Apoptosis</keyword>
<keyword id="KW-0472">Membrane</keyword>
<keyword id="KW-1185">Reference proteome</keyword>
<keyword id="KW-0812">Transmembrane</keyword>
<keyword id="KW-1133">Transmembrane helix</keyword>
<sequence length="1418" mass="159238">MDETDPVPDMSLLPDTVPVVVSGDGSAAGIQLCPALILGSPQALPGAIKHIYSRLAAAASEVDQGVPDLIISLISHGNSLSTKYMSSVENGLKSFLIGCGTWLISSGEVNDPMSRVASGALKNVLPQLEHQAEVLHILVNSDDMIASDTTNSKSVVDTSLNTLLLICRKEPNDSYETVASSIAKLRAATAVKLAHPPPALLIGVPSEPMSPSTYGNSAAILLSPSNDKRPFPVAIFAGASKESLIELLFFVEHGIPVIILQDSCELCAILHSSHLLLETSNFDNDKFISWLRSQLYPLGLADCYTLITKLLVSSNSGDVQLIEFIDSSQLSELSSVVVDRCLECYATTGEERQVLLLAAKLNSPSVLSSMDVAAQLDEELLTMILCECITKDDQLHFLSSVLQLSPPIRVTSNMLIRMMHHADEHFFTTIVLCQCMGYSYIPSEIDPRFANDIQKLVKKLSFGVDNLFDPNVFCNDSSHRDKHESIRILAIWSLLLHRPGIVKCLAAFADEPVAFSMVLSRIARSLGHESHDWHFYEKSLNTLSDSLSGSATTLFDTVFSTSPAKAYQLLCQPMEYFYGFNMTQLAFHCNAREIIAHECCQRWVHRKLYGNLQAKNFPIFLPKWAKICISAVLIIPVKFWMLVRPRERTKQDTVSPTVALLDVGKFPQKQRAISTYSVISSRSEALTALTAPLSTAFGFNSALNGAESATPQSMVFPLNIEEIDKDPRPFGKKNRIRRAHAPTLSTFYSTPIVKYWLSLLFRIVFICCLAYSVVLPGCGSNLWDTGMWVWSFFWWIENCFVLTARARKIPLSLMPWRVFDVFAFFVFLILLLVMKVFPVTPVLEVLGIDSIYSAKVVSAFFVLYVSYSTLFTYIPLSDIFGPMIVRVKLMLLRDFTNFLFMIALVMLSSAVAIQAVVFPDRPVTMEVFRKTLSWIWLSLFTTDLSNLSESETCRKSFLGAPKRYCSSVGQYANPSCPSQSLPAYLIVIEYFVILKLLLWPILFAFFSKTAKNVDDEADKIWRFQLYSLAEDFRLRPPLPPPLTIFCLICSACCRFSNSFSGFFSDFDHPDFEARDKCRTTWKFGSIYRNPSVPFKRNEFVNSFWRKLSMEQWKNTQQKAKISANKSELQELHNIHNHIRMMTLRDSYENSGTRKASELQFFEKYPESNILKISVNMVSKPWTVLVPRYNPPFYCKPAEDFPSDVQKYVDIATEQNVGELKRIWRSRQANDVTSSNDKCWKLSAAGFPLNPNGRTGMAGRGNHPRFGANRRCYYVVLSGGVEAKCQVLVDSQKNIPNEWHLENSSKDEHLTSILKMIGISDSDAHMFSMRRLDSSIITADKRIPSNDTSPAHLASEVAENENDTDNAWTEHDVWAISLRERRIITTIIGYSWLPTSAIRGTVLPWQADLVFRAKTIYGL</sequence>
<gene>
    <name type="primary">ced-11</name>
    <name type="ORF">ZK512.3</name>
</gene>
<organism>
    <name type="scientific">Caenorhabditis elegans</name>
    <dbReference type="NCBI Taxonomy" id="6239"/>
    <lineage>
        <taxon>Eukaryota</taxon>
        <taxon>Metazoa</taxon>
        <taxon>Ecdysozoa</taxon>
        <taxon>Nematoda</taxon>
        <taxon>Chromadorea</taxon>
        <taxon>Rhabditida</taxon>
        <taxon>Rhabditina</taxon>
        <taxon>Rhabditomorpha</taxon>
        <taxon>Rhabditoidea</taxon>
        <taxon>Rhabditidae</taxon>
        <taxon>Peloderinae</taxon>
        <taxon>Caenorhabditis</taxon>
    </lineage>
</organism>
<proteinExistence type="predicted"/>
<protein>
    <recommendedName>
        <fullName>Protein ced-11</fullName>
    </recommendedName>
    <alternativeName>
        <fullName>Cell death protein 11</fullName>
    </alternativeName>
</protein>